<accession>Q0AWM5</accession>
<keyword id="KW-0963">Cytoplasm</keyword>
<keyword id="KW-0489">Methyltransferase</keyword>
<keyword id="KW-1185">Reference proteome</keyword>
<keyword id="KW-0949">S-adenosyl-L-methionine</keyword>
<keyword id="KW-0808">Transferase</keyword>
<feature type="chain" id="PRO_1000046116" description="Ribosomal protein L11 methyltransferase">
    <location>
        <begin position="1"/>
        <end position="307"/>
    </location>
</feature>
<feature type="binding site" evidence="1">
    <location>
        <position position="156"/>
    </location>
    <ligand>
        <name>S-adenosyl-L-methionine</name>
        <dbReference type="ChEBI" id="CHEBI:59789"/>
    </ligand>
</feature>
<feature type="binding site" evidence="1">
    <location>
        <position position="177"/>
    </location>
    <ligand>
        <name>S-adenosyl-L-methionine</name>
        <dbReference type="ChEBI" id="CHEBI:59789"/>
    </ligand>
</feature>
<feature type="binding site" evidence="1">
    <location>
        <position position="199"/>
    </location>
    <ligand>
        <name>S-adenosyl-L-methionine</name>
        <dbReference type="ChEBI" id="CHEBI:59789"/>
    </ligand>
</feature>
<feature type="binding site" evidence="1">
    <location>
        <position position="243"/>
    </location>
    <ligand>
        <name>S-adenosyl-L-methionine</name>
        <dbReference type="ChEBI" id="CHEBI:59789"/>
    </ligand>
</feature>
<proteinExistence type="inferred from homology"/>
<dbReference type="EC" id="2.1.1.-" evidence="1"/>
<dbReference type="EMBL" id="CP000448">
    <property type="protein sequence ID" value="ABI68879.1"/>
    <property type="molecule type" value="Genomic_DNA"/>
</dbReference>
<dbReference type="RefSeq" id="WP_011640978.1">
    <property type="nucleotide sequence ID" value="NC_008346.1"/>
</dbReference>
<dbReference type="SMR" id="Q0AWM5"/>
<dbReference type="STRING" id="335541.Swol_1576"/>
<dbReference type="KEGG" id="swo:Swol_1576"/>
<dbReference type="eggNOG" id="COG2264">
    <property type="taxonomic scope" value="Bacteria"/>
</dbReference>
<dbReference type="HOGENOM" id="CLU_049382_0_1_9"/>
<dbReference type="Proteomes" id="UP000001968">
    <property type="component" value="Chromosome"/>
</dbReference>
<dbReference type="GO" id="GO:0005737">
    <property type="term" value="C:cytoplasm"/>
    <property type="evidence" value="ECO:0007669"/>
    <property type="project" value="UniProtKB-SubCell"/>
</dbReference>
<dbReference type="GO" id="GO:0016279">
    <property type="term" value="F:protein-lysine N-methyltransferase activity"/>
    <property type="evidence" value="ECO:0007669"/>
    <property type="project" value="RHEA"/>
</dbReference>
<dbReference type="GO" id="GO:0032259">
    <property type="term" value="P:methylation"/>
    <property type="evidence" value="ECO:0007669"/>
    <property type="project" value="UniProtKB-KW"/>
</dbReference>
<dbReference type="CDD" id="cd02440">
    <property type="entry name" value="AdoMet_MTases"/>
    <property type="match status" value="1"/>
</dbReference>
<dbReference type="Gene3D" id="3.40.50.150">
    <property type="entry name" value="Vaccinia Virus protein VP39"/>
    <property type="match status" value="1"/>
</dbReference>
<dbReference type="HAMAP" id="MF_00735">
    <property type="entry name" value="Methyltr_PrmA"/>
    <property type="match status" value="1"/>
</dbReference>
<dbReference type="InterPro" id="IPR050078">
    <property type="entry name" value="Ribosomal_L11_MeTrfase_PrmA"/>
</dbReference>
<dbReference type="InterPro" id="IPR004498">
    <property type="entry name" value="Ribosomal_PrmA_MeTrfase"/>
</dbReference>
<dbReference type="InterPro" id="IPR029063">
    <property type="entry name" value="SAM-dependent_MTases_sf"/>
</dbReference>
<dbReference type="NCBIfam" id="TIGR00406">
    <property type="entry name" value="prmA"/>
    <property type="match status" value="1"/>
</dbReference>
<dbReference type="PANTHER" id="PTHR43648">
    <property type="entry name" value="ELECTRON TRANSFER FLAVOPROTEIN BETA SUBUNIT LYSINE METHYLTRANSFERASE"/>
    <property type="match status" value="1"/>
</dbReference>
<dbReference type="PANTHER" id="PTHR43648:SF1">
    <property type="entry name" value="ELECTRON TRANSFER FLAVOPROTEIN BETA SUBUNIT LYSINE METHYLTRANSFERASE"/>
    <property type="match status" value="1"/>
</dbReference>
<dbReference type="Pfam" id="PF06325">
    <property type="entry name" value="PrmA"/>
    <property type="match status" value="1"/>
</dbReference>
<dbReference type="PIRSF" id="PIRSF000401">
    <property type="entry name" value="RPL11_MTase"/>
    <property type="match status" value="1"/>
</dbReference>
<dbReference type="SUPFAM" id="SSF53335">
    <property type="entry name" value="S-adenosyl-L-methionine-dependent methyltransferases"/>
    <property type="match status" value="1"/>
</dbReference>
<name>PRMA_SYNWW</name>
<evidence type="ECO:0000255" key="1">
    <source>
        <dbReference type="HAMAP-Rule" id="MF_00735"/>
    </source>
</evidence>
<organism>
    <name type="scientific">Syntrophomonas wolfei subsp. wolfei (strain DSM 2245B / Goettingen)</name>
    <dbReference type="NCBI Taxonomy" id="335541"/>
    <lineage>
        <taxon>Bacteria</taxon>
        <taxon>Bacillati</taxon>
        <taxon>Bacillota</taxon>
        <taxon>Clostridia</taxon>
        <taxon>Eubacteriales</taxon>
        <taxon>Syntrophomonadaceae</taxon>
        <taxon>Syntrophomonas</taxon>
    </lineage>
</organism>
<protein>
    <recommendedName>
        <fullName evidence="1">Ribosomal protein L11 methyltransferase</fullName>
        <shortName evidence="1">L11 Mtase</shortName>
        <ecNumber evidence="1">2.1.1.-</ecNumber>
    </recommendedName>
</protein>
<reference key="1">
    <citation type="journal article" date="2010" name="Environ. Microbiol.">
        <title>The genome of Syntrophomonas wolfei: new insights into syntrophic metabolism and biohydrogen production.</title>
        <authorList>
            <person name="Sieber J.R."/>
            <person name="Sims D.R."/>
            <person name="Han C."/>
            <person name="Kim E."/>
            <person name="Lykidis A."/>
            <person name="Lapidus A.L."/>
            <person name="McDonnald E."/>
            <person name="Rohlin L."/>
            <person name="Culley D.E."/>
            <person name="Gunsalus R."/>
            <person name="McInerney M.J."/>
        </authorList>
    </citation>
    <scope>NUCLEOTIDE SEQUENCE [LARGE SCALE GENOMIC DNA]</scope>
    <source>
        <strain>DSM 2245B / Goettingen</strain>
    </source>
</reference>
<comment type="function">
    <text evidence="1">Methylates ribosomal protein L11.</text>
</comment>
<comment type="catalytic activity">
    <reaction evidence="1">
        <text>L-lysyl-[protein] + 3 S-adenosyl-L-methionine = N(6),N(6),N(6)-trimethyl-L-lysyl-[protein] + 3 S-adenosyl-L-homocysteine + 3 H(+)</text>
        <dbReference type="Rhea" id="RHEA:54192"/>
        <dbReference type="Rhea" id="RHEA-COMP:9752"/>
        <dbReference type="Rhea" id="RHEA-COMP:13826"/>
        <dbReference type="ChEBI" id="CHEBI:15378"/>
        <dbReference type="ChEBI" id="CHEBI:29969"/>
        <dbReference type="ChEBI" id="CHEBI:57856"/>
        <dbReference type="ChEBI" id="CHEBI:59789"/>
        <dbReference type="ChEBI" id="CHEBI:61961"/>
    </reaction>
</comment>
<comment type="subcellular location">
    <subcellularLocation>
        <location evidence="1">Cytoplasm</location>
    </subcellularLocation>
</comment>
<comment type="similarity">
    <text evidence="1">Belongs to the methyltransferase superfamily. PrmA family.</text>
</comment>
<gene>
    <name evidence="1" type="primary">prmA</name>
    <name type="ordered locus">Swol_1576</name>
</gene>
<sequence length="307" mass="34381">MKWKEIAVLTEGICIEAIAGIFHRLGSGGVVIEDPQAARKYENQEEWNPNLVSPDFLDHEFVLIKAYFMEEREVMEELQSCLETVKENFNVECKVFIDEVRDEDWESSWKKYYHRFKIGERLVIKPSWEEYQPQSGEVVIDIDPGMAFGTGIHASTRFCMKFIDHYVKGGEKLIDAGCGSGILSIAAAKLGAARVLAMDVEELSVKIARENVELNGLSDIITVKLGNIVEEIQTFEADMVAANITAEVVTCLIPEAAKVLKSGGYFFGSGIVDSRWPGVEKQLKTHGFVIEQVLQDVDWIGVAARKE</sequence>